<proteinExistence type="evidence at transcript level"/>
<feature type="chain" id="PRO_0000260258" description="Glutathione hydrolase 7 heavy chain" evidence="1">
    <location>
        <begin position="1"/>
        <end position="472"/>
    </location>
</feature>
<feature type="chain" id="PRO_0000260259" description="Glutathione hydrolase 7 light chain" evidence="1">
    <location>
        <begin position="473"/>
        <end position="662"/>
    </location>
</feature>
<feature type="topological domain" description="Cytoplasmic" evidence="2">
    <location>
        <begin position="1"/>
        <end position="106"/>
    </location>
</feature>
<feature type="transmembrane region" description="Helical; Signal-anchor for type II membrane protein" evidence="7">
    <location>
        <begin position="107"/>
        <end position="127"/>
    </location>
</feature>
<feature type="topological domain" description="Extracellular" evidence="2">
    <location>
        <begin position="128"/>
        <end position="662"/>
    </location>
</feature>
<feature type="region of interest" description="Disordered" evidence="8">
    <location>
        <begin position="26"/>
        <end position="90"/>
    </location>
</feature>
<feature type="compositionally biased region" description="Low complexity" evidence="8">
    <location>
        <begin position="72"/>
        <end position="83"/>
    </location>
</feature>
<feature type="modified residue" description="Phosphoserine" evidence="5">
    <location>
        <position position="17"/>
    </location>
</feature>
<feature type="modified residue" description="Phosphoserine" evidence="6">
    <location>
        <position position="72"/>
    </location>
</feature>
<feature type="modified residue" description="Phosphoserine" evidence="4">
    <location>
        <position position="79"/>
    </location>
</feature>
<feature type="modified residue" description="Phosphoserine" evidence="4">
    <location>
        <position position="83"/>
    </location>
</feature>
<feature type="glycosylation site" description="N-linked (GlcNAc...) asparagine" evidence="7">
    <location>
        <position position="198"/>
    </location>
</feature>
<feature type="glycosylation site" description="N-linked (GlcNAc...) asparagine" evidence="7">
    <location>
        <position position="267"/>
    </location>
</feature>
<feature type="glycosylation site" description="N-linked (GlcNAc...) asparagine" evidence="7">
    <location>
        <position position="283"/>
    </location>
</feature>
<feature type="glycosylation site" description="N-linked (GlcNAc...) asparagine" evidence="7">
    <location>
        <position position="330"/>
    </location>
</feature>
<feature type="glycosylation site" description="N-linked (GlcNAc...) asparagine" evidence="7">
    <location>
        <position position="353"/>
    </location>
</feature>
<feature type="glycosylation site" description="N-linked (GlcNAc...) asparagine" evidence="7">
    <location>
        <position position="394"/>
    </location>
</feature>
<feature type="glycosylation site" description="N-linked (GlcNAc...) asparagine" evidence="7">
    <location>
        <position position="452"/>
    </location>
</feature>
<feature type="glycosylation site" description="N-linked (GlcNAc...) asparagine" evidence="7">
    <location>
        <position position="519"/>
    </location>
</feature>
<feature type="glycosylation site" description="N-linked (GlcNAc...) asparagine" evidence="7">
    <location>
        <position position="586"/>
    </location>
</feature>
<dbReference type="EC" id="3.4.19.13" evidence="3"/>
<dbReference type="EC" id="2.3.2.2" evidence="3"/>
<dbReference type="EMBL" id="BT026206">
    <property type="protein sequence ID" value="ABG67045.1"/>
    <property type="molecule type" value="mRNA"/>
</dbReference>
<dbReference type="EMBL" id="BC150107">
    <property type="protein sequence ID" value="AAI50108.1"/>
    <property type="molecule type" value="mRNA"/>
</dbReference>
<dbReference type="RefSeq" id="NP_001069869.1">
    <property type="nucleotide sequence ID" value="NM_001076401.1"/>
</dbReference>
<dbReference type="SMR" id="Q0V8L2"/>
<dbReference type="FunCoup" id="Q0V8L2">
    <property type="interactions" value="1303"/>
</dbReference>
<dbReference type="STRING" id="9913.ENSBTAP00000017688"/>
<dbReference type="MEROPS" id="T03.017"/>
<dbReference type="GlyCosmos" id="Q0V8L2">
    <property type="glycosylation" value="9 sites, No reported glycans"/>
</dbReference>
<dbReference type="GlyGen" id="Q0V8L2">
    <property type="glycosylation" value="9 sites"/>
</dbReference>
<dbReference type="PaxDb" id="9913-ENSBTAP00000017688"/>
<dbReference type="Ensembl" id="ENSBTAT00000017688.7">
    <property type="protein sequence ID" value="ENSBTAP00000017688.5"/>
    <property type="gene ID" value="ENSBTAG00000013301.7"/>
</dbReference>
<dbReference type="GeneID" id="615929"/>
<dbReference type="KEGG" id="bta:615929"/>
<dbReference type="CTD" id="2686"/>
<dbReference type="VEuPathDB" id="HostDB:ENSBTAG00000013301"/>
<dbReference type="VGNC" id="VGNC:29346">
    <property type="gene designation" value="GGT7"/>
</dbReference>
<dbReference type="eggNOG" id="KOG2410">
    <property type="taxonomic scope" value="Eukaryota"/>
</dbReference>
<dbReference type="GeneTree" id="ENSGT00940000156917"/>
<dbReference type="HOGENOM" id="CLU_014813_4_1_1"/>
<dbReference type="InParanoid" id="Q0V8L2"/>
<dbReference type="OMA" id="GVIICEI"/>
<dbReference type="OrthoDB" id="2015213at2759"/>
<dbReference type="TreeFam" id="TF333329"/>
<dbReference type="Reactome" id="R-BTA-174403">
    <property type="pathway name" value="Glutathione synthesis and recycling"/>
</dbReference>
<dbReference type="Reactome" id="R-BTA-5423646">
    <property type="pathway name" value="Aflatoxin activation and detoxification"/>
</dbReference>
<dbReference type="Reactome" id="R-BTA-9753281">
    <property type="pathway name" value="Paracetamol ADME"/>
</dbReference>
<dbReference type="UniPathway" id="UPA00204"/>
<dbReference type="Proteomes" id="UP000009136">
    <property type="component" value="Chromosome 13"/>
</dbReference>
<dbReference type="Bgee" id="ENSBTAG00000013301">
    <property type="expression patterns" value="Expressed in olfactory segment of nasal mucosa and 99 other cell types or tissues"/>
</dbReference>
<dbReference type="GO" id="GO:0005886">
    <property type="term" value="C:plasma membrane"/>
    <property type="evidence" value="ECO:0000318"/>
    <property type="project" value="GO_Central"/>
</dbReference>
<dbReference type="GO" id="GO:0036374">
    <property type="term" value="F:glutathione hydrolase activity"/>
    <property type="evidence" value="ECO:0000318"/>
    <property type="project" value="GO_Central"/>
</dbReference>
<dbReference type="GO" id="GO:0103068">
    <property type="term" value="F:leukotriene C4 gamma-glutamyl transferase activity"/>
    <property type="evidence" value="ECO:0007669"/>
    <property type="project" value="UniProtKB-EC"/>
</dbReference>
<dbReference type="GO" id="GO:0006750">
    <property type="term" value="P:glutathione biosynthetic process"/>
    <property type="evidence" value="ECO:0007669"/>
    <property type="project" value="UniProtKB-KW"/>
</dbReference>
<dbReference type="GO" id="GO:0006751">
    <property type="term" value="P:glutathione catabolic process"/>
    <property type="evidence" value="ECO:0000318"/>
    <property type="project" value="GO_Central"/>
</dbReference>
<dbReference type="GO" id="GO:1902883">
    <property type="term" value="P:negative regulation of response to oxidative stress"/>
    <property type="evidence" value="ECO:0007669"/>
    <property type="project" value="Ensembl"/>
</dbReference>
<dbReference type="FunFam" id="3.60.20.40:FF:000002">
    <property type="entry name" value="gamma-glutamyltransferase 7"/>
    <property type="match status" value="1"/>
</dbReference>
<dbReference type="FunFam" id="1.10.246.130:FF:000003">
    <property type="entry name" value="Glutathione hydrolase 7"/>
    <property type="match status" value="1"/>
</dbReference>
<dbReference type="Gene3D" id="1.10.246.130">
    <property type="match status" value="1"/>
</dbReference>
<dbReference type="Gene3D" id="3.60.20.40">
    <property type="match status" value="1"/>
</dbReference>
<dbReference type="InterPro" id="IPR043138">
    <property type="entry name" value="GGT_lsub_C"/>
</dbReference>
<dbReference type="InterPro" id="IPR000101">
    <property type="entry name" value="GGT_peptidase"/>
</dbReference>
<dbReference type="InterPro" id="IPR043137">
    <property type="entry name" value="GGT_ssub"/>
</dbReference>
<dbReference type="InterPro" id="IPR029055">
    <property type="entry name" value="Ntn_hydrolases_N"/>
</dbReference>
<dbReference type="PANTHER" id="PTHR11686">
    <property type="entry name" value="GAMMA GLUTAMYL TRANSPEPTIDASE"/>
    <property type="match status" value="1"/>
</dbReference>
<dbReference type="PANTHER" id="PTHR11686:SF54">
    <property type="entry name" value="GLUTATHIONE HYDROLASE 7"/>
    <property type="match status" value="1"/>
</dbReference>
<dbReference type="Pfam" id="PF01019">
    <property type="entry name" value="G_glu_transpept"/>
    <property type="match status" value="1"/>
</dbReference>
<dbReference type="PRINTS" id="PR01210">
    <property type="entry name" value="GGTRANSPTASE"/>
</dbReference>
<dbReference type="SUPFAM" id="SSF56235">
    <property type="entry name" value="N-terminal nucleophile aminohydrolases (Ntn hydrolases)"/>
    <property type="match status" value="1"/>
</dbReference>
<accession>Q0V8L2</accession>
<accession>A6QR42</accession>
<sequence length="662" mass="70652">MAAENEASQESALGAYSPVDYMSITSFPRLPEDEPAPAVPLRGRKDEDAFLGDPDTDPDSFLKSARLQRLPSSSSEMGSQDGSPLRETRKDPFSAAASECSCRQDGLTVIVTACLTFATGVTVALIMQIYFGDPQIFHQGAVVTDAARCTSLGIEVLSKQGSSVDAAVAAALCLGIVAPHSSGLGGGGVMLVHDIRRNKSHLIDFRESAPGALREEALQRSWETKPGLLVGVPGMVKGLHEAHQLYGRLPWSQVLAFAAAVAQDGFNVTHDLAQALAEQPPPNASDRFRETFLPMGHPPLPGSLLRRPDLAAVLEVLGTYGPAAFYAGGNLTLEMVAEAQHAGGVITEEDFSNYSALLEKPVCGVYRGHLVLSPRPPHTGPALISALNILEGFNLTSLVSREQALHWVAETLKIALALASRLGDPIYDSTITESMDDMLSKVEAAYFRGQINDSQAAPVPLLPIYELNGAPTAAQVLIMGPDDFIVAMVSSLNRPFGSGLITPSGILLNSQMLDFSWPNRTANHPAPSLENSVQPGKRPLSFLLPTVVRPAEGLCGTYLALGANGAARGLSGLTQVLLNVLTLNRNLSDSLARGRLHPDLQTNLLQVDSEFTEEEIEFLEARGHHVEKVDVLSWVHGSRRTNNFIIGVKDPRSPDAAGATIL</sequence>
<keyword id="KW-0012">Acyltransferase</keyword>
<keyword id="KW-0317">Glutathione biosynthesis</keyword>
<keyword id="KW-0325">Glycoprotein</keyword>
<keyword id="KW-0378">Hydrolase</keyword>
<keyword id="KW-0472">Membrane</keyword>
<keyword id="KW-0597">Phosphoprotein</keyword>
<keyword id="KW-1185">Reference proteome</keyword>
<keyword id="KW-0735">Signal-anchor</keyword>
<keyword id="KW-0808">Transferase</keyword>
<keyword id="KW-0812">Transmembrane</keyword>
<keyword id="KW-1133">Transmembrane helix</keyword>
<keyword id="KW-0865">Zymogen</keyword>
<gene>
    <name evidence="6" type="primary">GGT7</name>
    <name type="synonym">GGTL3</name>
</gene>
<reference key="1">
    <citation type="journal article" date="2005" name="BMC Genomics">
        <title>Characterization of 954 bovine full-CDS cDNA sequences.</title>
        <authorList>
            <person name="Harhay G.P."/>
            <person name="Sonstegard T.S."/>
            <person name="Keele J.W."/>
            <person name="Heaton M.P."/>
            <person name="Clawson M.L."/>
            <person name="Snelling W.M."/>
            <person name="Wiedmann R.T."/>
            <person name="Van Tassell C.P."/>
            <person name="Smith T.P.L."/>
        </authorList>
    </citation>
    <scope>NUCLEOTIDE SEQUENCE [LARGE SCALE MRNA]</scope>
</reference>
<reference key="2">
    <citation type="submission" date="2007-07" db="EMBL/GenBank/DDBJ databases">
        <authorList>
            <consortium name="NIH - Mammalian Gene Collection (MGC) project"/>
        </authorList>
    </citation>
    <scope>NUCLEOTIDE SEQUENCE [LARGE SCALE MRNA]</scope>
    <source>
        <strain>Hereford</strain>
        <tissue>Basal ganglia</tissue>
    </source>
</reference>
<protein>
    <recommendedName>
        <fullName evidence="9">Glutathione hydrolase 7</fullName>
        <ecNumber evidence="3">3.4.19.13</ecNumber>
    </recommendedName>
    <alternativeName>
        <fullName>Gamma-glutamyltransferase 7</fullName>
        <shortName>GGT 7</shortName>
        <ecNumber evidence="3">2.3.2.2</ecNumber>
    </alternativeName>
    <alternativeName>
        <fullName>Gamma-glutamyltransferase-like 3</fullName>
    </alternativeName>
    <alternativeName>
        <fullName>Gamma-glutamyltranspeptidase 7</fullName>
    </alternativeName>
    <component>
        <recommendedName>
            <fullName>Glutathione hydrolase 7 heavy chain</fullName>
        </recommendedName>
    </component>
    <component>
        <recommendedName>
            <fullName>Glutathione hydrolase 7 light chain</fullName>
        </recommendedName>
    </component>
</protein>
<name>GGT7_BOVIN</name>
<comment type="function">
    <text evidence="3">Hydrolyzes and transfers gamma-glutamyl moieties from glutathione and other gamma-glutamyl compounds to acceptors.</text>
</comment>
<comment type="catalytic activity">
    <reaction evidence="3">
        <text>an N-terminal (5-L-glutamyl)-[peptide] + an alpha-amino acid = 5-L-glutamyl amino acid + an N-terminal L-alpha-aminoacyl-[peptide]</text>
        <dbReference type="Rhea" id="RHEA:23904"/>
        <dbReference type="Rhea" id="RHEA-COMP:9780"/>
        <dbReference type="Rhea" id="RHEA-COMP:9795"/>
        <dbReference type="ChEBI" id="CHEBI:77644"/>
        <dbReference type="ChEBI" id="CHEBI:78597"/>
        <dbReference type="ChEBI" id="CHEBI:78599"/>
        <dbReference type="ChEBI" id="CHEBI:78608"/>
        <dbReference type="EC" id="2.3.2.2"/>
    </reaction>
    <physiologicalReaction direction="left-to-right" evidence="3">
        <dbReference type="Rhea" id="RHEA:23905"/>
    </physiologicalReaction>
</comment>
<comment type="catalytic activity">
    <reaction evidence="3">
        <text>glutathione + H2O = L-cysteinylglycine + L-glutamate</text>
        <dbReference type="Rhea" id="RHEA:28807"/>
        <dbReference type="ChEBI" id="CHEBI:15377"/>
        <dbReference type="ChEBI" id="CHEBI:29985"/>
        <dbReference type="ChEBI" id="CHEBI:57925"/>
        <dbReference type="ChEBI" id="CHEBI:61694"/>
        <dbReference type="EC" id="3.4.19.13"/>
    </reaction>
    <physiologicalReaction direction="left-to-right" evidence="3">
        <dbReference type="Rhea" id="RHEA:28808"/>
    </physiologicalReaction>
</comment>
<comment type="catalytic activity">
    <reaction evidence="3">
        <text>an S-substituted glutathione + H2O = an S-substituted L-cysteinylglycine + L-glutamate</text>
        <dbReference type="Rhea" id="RHEA:59468"/>
        <dbReference type="ChEBI" id="CHEBI:15377"/>
        <dbReference type="ChEBI" id="CHEBI:29985"/>
        <dbReference type="ChEBI" id="CHEBI:90779"/>
        <dbReference type="ChEBI" id="CHEBI:143103"/>
        <dbReference type="EC" id="3.4.19.13"/>
    </reaction>
    <physiologicalReaction direction="left-to-right" evidence="3">
        <dbReference type="Rhea" id="RHEA:59469"/>
    </physiologicalReaction>
</comment>
<comment type="pathway">
    <text evidence="3">Sulfur metabolism; glutathione metabolism.</text>
</comment>
<comment type="subunit">
    <text evidence="3">Heterodimer composed of the light and heavy chains. The active site is located in the light chain.</text>
</comment>
<comment type="subcellular location">
    <subcellularLocation>
        <location evidence="3">Membrane</location>
        <topology evidence="2">Single-pass type II membrane protein</topology>
    </subcellularLocation>
</comment>
<comment type="PTM">
    <text evidence="3">Cleaved by autocatalysis into a large and a small subunit and the autocatalytic cleavage is essential to the functional activation of the enzyme.</text>
</comment>
<comment type="similarity">
    <text evidence="9">Belongs to the gamma-glutamyltransferase family.</text>
</comment>
<evidence type="ECO:0000250" key="1"/>
<evidence type="ECO:0000250" key="2">
    <source>
        <dbReference type="UniProtKB" id="P07314"/>
    </source>
</evidence>
<evidence type="ECO:0000250" key="3">
    <source>
        <dbReference type="UniProtKB" id="P19440"/>
    </source>
</evidence>
<evidence type="ECO:0000250" key="4">
    <source>
        <dbReference type="UniProtKB" id="Q99JP7"/>
    </source>
</evidence>
<evidence type="ECO:0000250" key="5">
    <source>
        <dbReference type="UniProtKB" id="Q99MZ4"/>
    </source>
</evidence>
<evidence type="ECO:0000250" key="6">
    <source>
        <dbReference type="UniProtKB" id="Q9UJ14"/>
    </source>
</evidence>
<evidence type="ECO:0000255" key="7"/>
<evidence type="ECO:0000256" key="8">
    <source>
        <dbReference type="SAM" id="MobiDB-lite"/>
    </source>
</evidence>
<evidence type="ECO:0000305" key="9"/>
<organism>
    <name type="scientific">Bos taurus</name>
    <name type="common">Bovine</name>
    <dbReference type="NCBI Taxonomy" id="9913"/>
    <lineage>
        <taxon>Eukaryota</taxon>
        <taxon>Metazoa</taxon>
        <taxon>Chordata</taxon>
        <taxon>Craniata</taxon>
        <taxon>Vertebrata</taxon>
        <taxon>Euteleostomi</taxon>
        <taxon>Mammalia</taxon>
        <taxon>Eutheria</taxon>
        <taxon>Laurasiatheria</taxon>
        <taxon>Artiodactyla</taxon>
        <taxon>Ruminantia</taxon>
        <taxon>Pecora</taxon>
        <taxon>Bovidae</taxon>
        <taxon>Bovinae</taxon>
        <taxon>Bos</taxon>
    </lineage>
</organism>